<gene>
    <name evidence="1" type="primary">tolQ</name>
    <name type="ordered locus">PA0969</name>
</gene>
<organism>
    <name type="scientific">Pseudomonas aeruginosa (strain ATCC 15692 / DSM 22644 / CIP 104116 / JCM 14847 / LMG 12228 / 1C / PRS 101 / PAO1)</name>
    <dbReference type="NCBI Taxonomy" id="208964"/>
    <lineage>
        <taxon>Bacteria</taxon>
        <taxon>Pseudomonadati</taxon>
        <taxon>Pseudomonadota</taxon>
        <taxon>Gammaproteobacteria</taxon>
        <taxon>Pseudomonadales</taxon>
        <taxon>Pseudomonadaceae</taxon>
        <taxon>Pseudomonas</taxon>
    </lineage>
</organism>
<keyword id="KW-0131">Cell cycle</keyword>
<keyword id="KW-0132">Cell division</keyword>
<keyword id="KW-0997">Cell inner membrane</keyword>
<keyword id="KW-1003">Cell membrane</keyword>
<keyword id="KW-0472">Membrane</keyword>
<keyword id="KW-1185">Reference proteome</keyword>
<keyword id="KW-0812">Transmembrane</keyword>
<keyword id="KW-1133">Transmembrane helix</keyword>
<accession>P50598</accession>
<name>TOLQ_PSEAE</name>
<protein>
    <recommendedName>
        <fullName evidence="1">Tol-Pal system protein TolQ</fullName>
    </recommendedName>
</protein>
<reference key="1">
    <citation type="journal article" date="1996" name="J. Bacteriol.">
        <title>Identification and characterization of the tolQRA genes of Pseudomonas aeruginosa.</title>
        <authorList>
            <person name="Dennis J.J."/>
            <person name="Lafontaine E.R."/>
            <person name="Sokol P.A."/>
        </authorList>
    </citation>
    <scope>NUCLEOTIDE SEQUENCE [GENOMIC DNA]</scope>
    <source>
        <strain>PAO</strain>
    </source>
</reference>
<reference key="2">
    <citation type="journal article" date="2000" name="Nature">
        <title>Complete genome sequence of Pseudomonas aeruginosa PAO1, an opportunistic pathogen.</title>
        <authorList>
            <person name="Stover C.K."/>
            <person name="Pham X.-Q.T."/>
            <person name="Erwin A.L."/>
            <person name="Mizoguchi S.D."/>
            <person name="Warrener P."/>
            <person name="Hickey M.J."/>
            <person name="Brinkman F.S.L."/>
            <person name="Hufnagle W.O."/>
            <person name="Kowalik D.J."/>
            <person name="Lagrou M."/>
            <person name="Garber R.L."/>
            <person name="Goltry L."/>
            <person name="Tolentino E."/>
            <person name="Westbrock-Wadman S."/>
            <person name="Yuan Y."/>
            <person name="Brody L.L."/>
            <person name="Coulter S.N."/>
            <person name="Folger K.R."/>
            <person name="Kas A."/>
            <person name="Larbig K."/>
            <person name="Lim R.M."/>
            <person name="Smith K.A."/>
            <person name="Spencer D.H."/>
            <person name="Wong G.K.-S."/>
            <person name="Wu Z."/>
            <person name="Paulsen I.T."/>
            <person name="Reizer J."/>
            <person name="Saier M.H. Jr."/>
            <person name="Hancock R.E.W."/>
            <person name="Lory S."/>
            <person name="Olson M.V."/>
        </authorList>
    </citation>
    <scope>NUCLEOTIDE SEQUENCE [LARGE SCALE GENOMIC DNA]</scope>
    <source>
        <strain>ATCC 15692 / DSM 22644 / CIP 104116 / JCM 14847 / LMG 12228 / 1C / PRS 101 / PAO1</strain>
    </source>
</reference>
<comment type="function">
    <text evidence="1">Part of the Tol-Pal system, which plays a role in outer membrane invagination during cell division and is important for maintaining outer membrane integrity.</text>
</comment>
<comment type="subunit">
    <text evidence="1">The Tol-Pal system is composed of five core proteins: the inner membrane proteins TolA, TolQ and TolR, the periplasmic protein TolB and the outer membrane protein Pal. They form a network linking the inner and outer membranes and the peptidoglycan layer.</text>
</comment>
<comment type="subcellular location">
    <subcellularLocation>
        <location evidence="1 2">Cell inner membrane</location>
        <topology evidence="1 2">Multi-pass membrane protein</topology>
    </subcellularLocation>
</comment>
<comment type="similarity">
    <text evidence="1 2">Belongs to the ExbB/TolQ family.</text>
</comment>
<evidence type="ECO:0000255" key="1">
    <source>
        <dbReference type="HAMAP-Rule" id="MF_02202"/>
    </source>
</evidence>
<evidence type="ECO:0000305" key="2"/>
<feature type="chain" id="PRO_0000145825" description="Tol-Pal system protein TolQ">
    <location>
        <begin position="1"/>
        <end position="231"/>
    </location>
</feature>
<feature type="transmembrane region" description="Helical" evidence="1">
    <location>
        <begin position="20"/>
        <end position="40"/>
    </location>
</feature>
<feature type="transmembrane region" description="Helical" evidence="1">
    <location>
        <begin position="134"/>
        <end position="154"/>
    </location>
</feature>
<feature type="transmembrane region" description="Helical" evidence="1">
    <location>
        <begin position="176"/>
        <end position="196"/>
    </location>
</feature>
<dbReference type="EMBL" id="U39558">
    <property type="protein sequence ID" value="AAC44658.1"/>
    <property type="molecule type" value="Genomic_DNA"/>
</dbReference>
<dbReference type="EMBL" id="AE004091">
    <property type="protein sequence ID" value="AAG04358.1"/>
    <property type="molecule type" value="Genomic_DNA"/>
</dbReference>
<dbReference type="PIR" id="C83525">
    <property type="entry name" value="C83525"/>
</dbReference>
<dbReference type="RefSeq" id="NP_249660.1">
    <property type="nucleotide sequence ID" value="NC_002516.2"/>
</dbReference>
<dbReference type="RefSeq" id="WP_003086125.1">
    <property type="nucleotide sequence ID" value="NZ_QZGE01000007.1"/>
</dbReference>
<dbReference type="SMR" id="P50598"/>
<dbReference type="FunCoup" id="P50598">
    <property type="interactions" value="405"/>
</dbReference>
<dbReference type="STRING" id="208964.PA0969"/>
<dbReference type="PaxDb" id="208964-PA0969"/>
<dbReference type="DNASU" id="882055"/>
<dbReference type="GeneID" id="77222448"/>
<dbReference type="GeneID" id="882055"/>
<dbReference type="KEGG" id="pae:PA0969"/>
<dbReference type="PATRIC" id="fig|208964.12.peg.1007"/>
<dbReference type="PseudoCAP" id="PA0969"/>
<dbReference type="HOGENOM" id="CLU_053325_2_2_6"/>
<dbReference type="InParanoid" id="P50598"/>
<dbReference type="OrthoDB" id="9805133at2"/>
<dbReference type="PhylomeDB" id="P50598"/>
<dbReference type="BioCyc" id="PAER208964:G1FZ6-990-MONOMER"/>
<dbReference type="Proteomes" id="UP000002438">
    <property type="component" value="Chromosome"/>
</dbReference>
<dbReference type="GO" id="GO:0005886">
    <property type="term" value="C:plasma membrane"/>
    <property type="evidence" value="ECO:0000318"/>
    <property type="project" value="GO_Central"/>
</dbReference>
<dbReference type="GO" id="GO:0043213">
    <property type="term" value="P:bacteriocin transport"/>
    <property type="evidence" value="ECO:0007669"/>
    <property type="project" value="InterPro"/>
</dbReference>
<dbReference type="GO" id="GO:0051301">
    <property type="term" value="P:cell division"/>
    <property type="evidence" value="ECO:0007669"/>
    <property type="project" value="UniProtKB-UniRule"/>
</dbReference>
<dbReference type="GO" id="GO:0017038">
    <property type="term" value="P:protein import"/>
    <property type="evidence" value="ECO:0000318"/>
    <property type="project" value="GO_Central"/>
</dbReference>
<dbReference type="HAMAP" id="MF_02202">
    <property type="entry name" value="TolQ"/>
    <property type="match status" value="1"/>
</dbReference>
<dbReference type="InterPro" id="IPR050790">
    <property type="entry name" value="ExbB/TolQ_transport"/>
</dbReference>
<dbReference type="InterPro" id="IPR002898">
    <property type="entry name" value="MotA_ExbB_proton_chnl"/>
</dbReference>
<dbReference type="InterPro" id="IPR014163">
    <property type="entry name" value="Tol-Pal_TolQ"/>
</dbReference>
<dbReference type="NCBIfam" id="TIGR02796">
    <property type="entry name" value="tolQ"/>
    <property type="match status" value="1"/>
</dbReference>
<dbReference type="PANTHER" id="PTHR30625">
    <property type="entry name" value="PROTEIN TOLQ"/>
    <property type="match status" value="1"/>
</dbReference>
<dbReference type="PANTHER" id="PTHR30625:SF3">
    <property type="entry name" value="TOL-PAL SYSTEM PROTEIN TOLQ"/>
    <property type="match status" value="1"/>
</dbReference>
<dbReference type="Pfam" id="PF01618">
    <property type="entry name" value="MotA_ExbB"/>
    <property type="match status" value="1"/>
</dbReference>
<proteinExistence type="inferred from homology"/>
<sequence length="231" mass="25282">MEPNVVDHTSMWSLISNASIVVQLVMLTLVAASVTSWIMIFQRGNAMRAAKKALDAFEERFWSGIDLSKLYRQAGSNPDPDSGVEQIFRAGFKEFSRLRQQPGVDPDAVMEGVARAMRVAISREEEKLEASLPFLATVGSTSPYVGLFGTVWGIMNSFRGLATVQQATLATVAPGIAEALIATAIGLFAAIPAVIAYNRFSARSEMLIGRYYTFADEFQAILHRKVHTSDD</sequence>